<comment type="function">
    <text evidence="1">The GINS complex plays an essential role in the initiation of DNA replication.</text>
</comment>
<comment type="subunit">
    <text evidence="1">Component of the GINS complex which is a heterotetramer of Sld5, Psf1, Psf2 and Psf3.</text>
</comment>
<comment type="interaction">
    <interactant intactId="EBI-133591">
        <id>Q9VQY9</id>
    </interactant>
    <interactant intactId="EBI-124971">
        <id>Q9VBI1</id>
        <label>Sld5</label>
    </interactant>
    <organismsDiffer>false</organismsDiffer>
    <experiments>3</experiments>
</comment>
<comment type="subcellular location">
    <subcellularLocation>
        <location evidence="1">Nucleus</location>
    </subcellularLocation>
</comment>
<comment type="similarity">
    <text evidence="3">Belongs to the GINS2/PSF2 family.</text>
</comment>
<comment type="sequence caution" evidence="3">
    <conflict type="erroneous initiation">
        <sequence resource="EMBL-CDS" id="AAL48856"/>
    </conflict>
    <text>Extended N-terminus.</text>
</comment>
<feature type="chain" id="PRO_0000194816" description="Probable DNA replication complex GINS protein PSF2">
    <location>
        <begin position="1"/>
        <end position="203"/>
    </location>
</feature>
<feature type="region of interest" description="Disordered" evidence="2">
    <location>
        <begin position="179"/>
        <end position="203"/>
    </location>
</feature>
<feature type="compositionally biased region" description="Low complexity" evidence="2">
    <location>
        <begin position="182"/>
        <end position="203"/>
    </location>
</feature>
<reference key="1">
    <citation type="journal article" date="2000" name="Science">
        <title>The genome sequence of Drosophila melanogaster.</title>
        <authorList>
            <person name="Adams M.D."/>
            <person name="Celniker S.E."/>
            <person name="Holt R.A."/>
            <person name="Evans C.A."/>
            <person name="Gocayne J.D."/>
            <person name="Amanatides P.G."/>
            <person name="Scherer S.E."/>
            <person name="Li P.W."/>
            <person name="Hoskins R.A."/>
            <person name="Galle R.F."/>
            <person name="George R.A."/>
            <person name="Lewis S.E."/>
            <person name="Richards S."/>
            <person name="Ashburner M."/>
            <person name="Henderson S.N."/>
            <person name="Sutton G.G."/>
            <person name="Wortman J.R."/>
            <person name="Yandell M.D."/>
            <person name="Zhang Q."/>
            <person name="Chen L.X."/>
            <person name="Brandon R.C."/>
            <person name="Rogers Y.-H.C."/>
            <person name="Blazej R.G."/>
            <person name="Champe M."/>
            <person name="Pfeiffer B.D."/>
            <person name="Wan K.H."/>
            <person name="Doyle C."/>
            <person name="Baxter E.G."/>
            <person name="Helt G."/>
            <person name="Nelson C.R."/>
            <person name="Miklos G.L.G."/>
            <person name="Abril J.F."/>
            <person name="Agbayani A."/>
            <person name="An H.-J."/>
            <person name="Andrews-Pfannkoch C."/>
            <person name="Baldwin D."/>
            <person name="Ballew R.M."/>
            <person name="Basu A."/>
            <person name="Baxendale J."/>
            <person name="Bayraktaroglu L."/>
            <person name="Beasley E.M."/>
            <person name="Beeson K.Y."/>
            <person name="Benos P.V."/>
            <person name="Berman B.P."/>
            <person name="Bhandari D."/>
            <person name="Bolshakov S."/>
            <person name="Borkova D."/>
            <person name="Botchan M.R."/>
            <person name="Bouck J."/>
            <person name="Brokstein P."/>
            <person name="Brottier P."/>
            <person name="Burtis K.C."/>
            <person name="Busam D.A."/>
            <person name="Butler H."/>
            <person name="Cadieu E."/>
            <person name="Center A."/>
            <person name="Chandra I."/>
            <person name="Cherry J.M."/>
            <person name="Cawley S."/>
            <person name="Dahlke C."/>
            <person name="Davenport L.B."/>
            <person name="Davies P."/>
            <person name="de Pablos B."/>
            <person name="Delcher A."/>
            <person name="Deng Z."/>
            <person name="Mays A.D."/>
            <person name="Dew I."/>
            <person name="Dietz S.M."/>
            <person name="Dodson K."/>
            <person name="Doup L.E."/>
            <person name="Downes M."/>
            <person name="Dugan-Rocha S."/>
            <person name="Dunkov B.C."/>
            <person name="Dunn P."/>
            <person name="Durbin K.J."/>
            <person name="Evangelista C.C."/>
            <person name="Ferraz C."/>
            <person name="Ferriera S."/>
            <person name="Fleischmann W."/>
            <person name="Fosler C."/>
            <person name="Gabrielian A.E."/>
            <person name="Garg N.S."/>
            <person name="Gelbart W.M."/>
            <person name="Glasser K."/>
            <person name="Glodek A."/>
            <person name="Gong F."/>
            <person name="Gorrell J.H."/>
            <person name="Gu Z."/>
            <person name="Guan P."/>
            <person name="Harris M."/>
            <person name="Harris N.L."/>
            <person name="Harvey D.A."/>
            <person name="Heiman T.J."/>
            <person name="Hernandez J.R."/>
            <person name="Houck J."/>
            <person name="Hostin D."/>
            <person name="Houston K.A."/>
            <person name="Howland T.J."/>
            <person name="Wei M.-H."/>
            <person name="Ibegwam C."/>
            <person name="Jalali M."/>
            <person name="Kalush F."/>
            <person name="Karpen G.H."/>
            <person name="Ke Z."/>
            <person name="Kennison J.A."/>
            <person name="Ketchum K.A."/>
            <person name="Kimmel B.E."/>
            <person name="Kodira C.D."/>
            <person name="Kraft C.L."/>
            <person name="Kravitz S."/>
            <person name="Kulp D."/>
            <person name="Lai Z."/>
            <person name="Lasko P."/>
            <person name="Lei Y."/>
            <person name="Levitsky A.A."/>
            <person name="Li J.H."/>
            <person name="Li Z."/>
            <person name="Liang Y."/>
            <person name="Lin X."/>
            <person name="Liu X."/>
            <person name="Mattei B."/>
            <person name="McIntosh T.C."/>
            <person name="McLeod M.P."/>
            <person name="McPherson D."/>
            <person name="Merkulov G."/>
            <person name="Milshina N.V."/>
            <person name="Mobarry C."/>
            <person name="Morris J."/>
            <person name="Moshrefi A."/>
            <person name="Mount S.M."/>
            <person name="Moy M."/>
            <person name="Murphy B."/>
            <person name="Murphy L."/>
            <person name="Muzny D.M."/>
            <person name="Nelson D.L."/>
            <person name="Nelson D.R."/>
            <person name="Nelson K.A."/>
            <person name="Nixon K."/>
            <person name="Nusskern D.R."/>
            <person name="Pacleb J.M."/>
            <person name="Palazzolo M."/>
            <person name="Pittman G.S."/>
            <person name="Pan S."/>
            <person name="Pollard J."/>
            <person name="Puri V."/>
            <person name="Reese M.G."/>
            <person name="Reinert K."/>
            <person name="Remington K."/>
            <person name="Saunders R.D.C."/>
            <person name="Scheeler F."/>
            <person name="Shen H."/>
            <person name="Shue B.C."/>
            <person name="Siden-Kiamos I."/>
            <person name="Simpson M."/>
            <person name="Skupski M.P."/>
            <person name="Smith T.J."/>
            <person name="Spier E."/>
            <person name="Spradling A.C."/>
            <person name="Stapleton M."/>
            <person name="Strong R."/>
            <person name="Sun E."/>
            <person name="Svirskas R."/>
            <person name="Tector C."/>
            <person name="Turner R."/>
            <person name="Venter E."/>
            <person name="Wang A.H."/>
            <person name="Wang X."/>
            <person name="Wang Z.-Y."/>
            <person name="Wassarman D.A."/>
            <person name="Weinstock G.M."/>
            <person name="Weissenbach J."/>
            <person name="Williams S.M."/>
            <person name="Woodage T."/>
            <person name="Worley K.C."/>
            <person name="Wu D."/>
            <person name="Yang S."/>
            <person name="Yao Q.A."/>
            <person name="Ye J."/>
            <person name="Yeh R.-F."/>
            <person name="Zaveri J.S."/>
            <person name="Zhan M."/>
            <person name="Zhang G."/>
            <person name="Zhao Q."/>
            <person name="Zheng L."/>
            <person name="Zheng X.H."/>
            <person name="Zhong F.N."/>
            <person name="Zhong W."/>
            <person name="Zhou X."/>
            <person name="Zhu S.C."/>
            <person name="Zhu X."/>
            <person name="Smith H.O."/>
            <person name="Gibbs R.A."/>
            <person name="Myers E.W."/>
            <person name="Rubin G.M."/>
            <person name="Venter J.C."/>
        </authorList>
    </citation>
    <scope>NUCLEOTIDE SEQUENCE [LARGE SCALE GENOMIC DNA]</scope>
    <source>
        <strain>Berkeley</strain>
    </source>
</reference>
<reference key="2">
    <citation type="journal article" date="2002" name="Genome Biol.">
        <title>Annotation of the Drosophila melanogaster euchromatic genome: a systematic review.</title>
        <authorList>
            <person name="Misra S."/>
            <person name="Crosby M.A."/>
            <person name="Mungall C.J."/>
            <person name="Matthews B.B."/>
            <person name="Campbell K.S."/>
            <person name="Hradecky P."/>
            <person name="Huang Y."/>
            <person name="Kaminker J.S."/>
            <person name="Millburn G.H."/>
            <person name="Prochnik S.E."/>
            <person name="Smith C.D."/>
            <person name="Tupy J.L."/>
            <person name="Whitfield E.J."/>
            <person name="Bayraktaroglu L."/>
            <person name="Berman B.P."/>
            <person name="Bettencourt B.R."/>
            <person name="Celniker S.E."/>
            <person name="de Grey A.D.N.J."/>
            <person name="Drysdale R.A."/>
            <person name="Harris N.L."/>
            <person name="Richter J."/>
            <person name="Russo S."/>
            <person name="Schroeder A.J."/>
            <person name="Shu S.Q."/>
            <person name="Stapleton M."/>
            <person name="Yamada C."/>
            <person name="Ashburner M."/>
            <person name="Gelbart W.M."/>
            <person name="Rubin G.M."/>
            <person name="Lewis S.E."/>
        </authorList>
    </citation>
    <scope>GENOME REANNOTATION</scope>
    <source>
        <strain>Berkeley</strain>
    </source>
</reference>
<reference key="3">
    <citation type="journal article" date="2002" name="Genome Biol.">
        <title>A Drosophila full-length cDNA resource.</title>
        <authorList>
            <person name="Stapleton M."/>
            <person name="Carlson J.W."/>
            <person name="Brokstein P."/>
            <person name="Yu C."/>
            <person name="Champe M."/>
            <person name="George R.A."/>
            <person name="Guarin H."/>
            <person name="Kronmiller B."/>
            <person name="Pacleb J.M."/>
            <person name="Park S."/>
            <person name="Wan K.H."/>
            <person name="Rubin G.M."/>
            <person name="Celniker S.E."/>
        </authorList>
    </citation>
    <scope>NUCLEOTIDE SEQUENCE [LARGE SCALE MRNA]</scope>
    <source>
        <strain>Berkeley</strain>
        <tissue>Embryo</tissue>
    </source>
</reference>
<gene>
    <name type="primary">Psf2</name>
    <name type="ORF">CG18013</name>
</gene>
<protein>
    <recommendedName>
        <fullName>Probable DNA replication complex GINS protein PSF2</fullName>
    </recommendedName>
    <alternativeName>
        <fullName>GINS complex subunit 2</fullName>
    </alternativeName>
</protein>
<sequence length="203" mass="23114">MDPSIIEFIGEKCMISIIPNFSNEPLHLIYGPVGPFRAGFPVFVPLWMATHLRKQQKCRIVPPEWMDMDILEEIKEEEKRSKFFTKMPCEHYMVVAQLVMSTAPDDVPRCEELRTVIKDIFDIRESKLRTSIDAFIKGEGTYAKLDNLTLLEIHSVRPILPYSLDHIARYQRTATASQRDTSMLSASMAGSSSGPNSNSLFSQ</sequence>
<name>PSF2_DROME</name>
<dbReference type="EMBL" id="AE014134">
    <property type="protein sequence ID" value="AAF51021.3"/>
    <property type="molecule type" value="Genomic_DNA"/>
</dbReference>
<dbReference type="EMBL" id="AE014134">
    <property type="protein sequence ID" value="AGB92558.1"/>
    <property type="molecule type" value="Genomic_DNA"/>
</dbReference>
<dbReference type="EMBL" id="AY071234">
    <property type="protein sequence ID" value="AAL48856.1"/>
    <property type="status" value="ALT_INIT"/>
    <property type="molecule type" value="mRNA"/>
</dbReference>
<dbReference type="RefSeq" id="NP_001260022.1">
    <property type="nucleotide sequence ID" value="NM_001273093.1"/>
</dbReference>
<dbReference type="RefSeq" id="NP_608826.4">
    <property type="nucleotide sequence ID" value="NM_134982.3"/>
</dbReference>
<dbReference type="PDB" id="6RAW">
    <property type="method" value="EM"/>
    <property type="resolution" value="3.70 A"/>
    <property type="chains" value="L=1-203"/>
</dbReference>
<dbReference type="PDB" id="6RAX">
    <property type="method" value="EM"/>
    <property type="resolution" value="3.99 A"/>
    <property type="chains" value="L=1-203"/>
</dbReference>
<dbReference type="PDB" id="6RAY">
    <property type="method" value="EM"/>
    <property type="resolution" value="4.28 A"/>
    <property type="chains" value="L=1-203"/>
</dbReference>
<dbReference type="PDB" id="6RAZ">
    <property type="method" value="EM"/>
    <property type="resolution" value="4.46 A"/>
    <property type="chains" value="L=1-203"/>
</dbReference>
<dbReference type="PDBsum" id="6RAW"/>
<dbReference type="PDBsum" id="6RAX"/>
<dbReference type="PDBsum" id="6RAY"/>
<dbReference type="PDBsum" id="6RAZ"/>
<dbReference type="EMDB" id="EMD-2772"/>
<dbReference type="EMDB" id="EMD-3318"/>
<dbReference type="EMDB" id="EMD-3319"/>
<dbReference type="EMDB" id="EMD-3320"/>
<dbReference type="EMDB" id="EMD-3321"/>
<dbReference type="EMDB" id="EMD-4785"/>
<dbReference type="EMDB" id="EMD-4786"/>
<dbReference type="EMDB" id="EMD-4787"/>
<dbReference type="EMDB" id="EMD-4788"/>
<dbReference type="SMR" id="Q9VQY9"/>
<dbReference type="BioGRID" id="59835">
    <property type="interactions" value="12"/>
</dbReference>
<dbReference type="ComplexPortal" id="CPX-2670">
    <property type="entry name" value="GINS complex"/>
</dbReference>
<dbReference type="DIP" id="DIP-61215N"/>
<dbReference type="FunCoup" id="Q9VQY9">
    <property type="interactions" value="1501"/>
</dbReference>
<dbReference type="IntAct" id="Q9VQY9">
    <property type="interactions" value="10"/>
</dbReference>
<dbReference type="STRING" id="7227.FBpp0303866"/>
<dbReference type="PaxDb" id="7227-FBpp0303867"/>
<dbReference type="DNASU" id="33641"/>
<dbReference type="EnsemblMetazoa" id="FBtr0331449">
    <property type="protein sequence ID" value="FBpp0303866"/>
    <property type="gene ID" value="FBgn0261976"/>
</dbReference>
<dbReference type="EnsemblMetazoa" id="FBtr0331450">
    <property type="protein sequence ID" value="FBpp0303867"/>
    <property type="gene ID" value="FBgn0261976"/>
</dbReference>
<dbReference type="GeneID" id="33641"/>
<dbReference type="KEGG" id="dme:Dmel_CG18013"/>
<dbReference type="UCSC" id="CG18013-RA">
    <property type="organism name" value="d. melanogaster"/>
</dbReference>
<dbReference type="AGR" id="FB:FBgn0261976"/>
<dbReference type="CTD" id="33641"/>
<dbReference type="FlyBase" id="FBgn0261976">
    <property type="gene designation" value="Psf2"/>
</dbReference>
<dbReference type="VEuPathDB" id="VectorBase:FBgn0261976"/>
<dbReference type="eggNOG" id="KOG4071">
    <property type="taxonomic scope" value="Eukaryota"/>
</dbReference>
<dbReference type="GeneTree" id="ENSGT00390000007838"/>
<dbReference type="HOGENOM" id="CLU_078274_2_0_1"/>
<dbReference type="InParanoid" id="Q9VQY9"/>
<dbReference type="OMA" id="DSLNCMY"/>
<dbReference type="OrthoDB" id="1938138at2759"/>
<dbReference type="PhylomeDB" id="Q9VQY9"/>
<dbReference type="Reactome" id="R-DME-176974">
    <property type="pathway name" value="Unwinding of DNA"/>
</dbReference>
<dbReference type="BioGRID-ORCS" id="33641">
    <property type="hits" value="1 hit in 1 CRISPR screen"/>
</dbReference>
<dbReference type="GenomeRNAi" id="33641"/>
<dbReference type="PRO" id="PR:Q9VQY9"/>
<dbReference type="Proteomes" id="UP000000803">
    <property type="component" value="Chromosome 2L"/>
</dbReference>
<dbReference type="Bgee" id="FBgn0261976">
    <property type="expression patterns" value="Expressed in visual pigment cell (sensu Nematoda and Protostomia) in testis and 62 other cell types or tissues"/>
</dbReference>
<dbReference type="GO" id="GO:0071162">
    <property type="term" value="C:CMG complex"/>
    <property type="evidence" value="ECO:0000314"/>
    <property type="project" value="FlyBase"/>
</dbReference>
<dbReference type="GO" id="GO:0000811">
    <property type="term" value="C:GINS complex"/>
    <property type="evidence" value="ECO:0000314"/>
    <property type="project" value="FlyBase"/>
</dbReference>
<dbReference type="GO" id="GO:0005634">
    <property type="term" value="C:nucleus"/>
    <property type="evidence" value="ECO:0000250"/>
    <property type="project" value="UniProtKB"/>
</dbReference>
<dbReference type="GO" id="GO:0030261">
    <property type="term" value="P:chromosome condensation"/>
    <property type="evidence" value="ECO:0000315"/>
    <property type="project" value="FlyBase"/>
</dbReference>
<dbReference type="GO" id="GO:0006270">
    <property type="term" value="P:DNA replication initiation"/>
    <property type="evidence" value="ECO:0000305"/>
    <property type="project" value="FlyBase"/>
</dbReference>
<dbReference type="GO" id="GO:0006271">
    <property type="term" value="P:DNA strand elongation involved in DNA replication"/>
    <property type="evidence" value="ECO:0000250"/>
    <property type="project" value="UniProtKB"/>
</dbReference>
<dbReference type="GO" id="GO:0000727">
    <property type="term" value="P:double-strand break repair via break-induced replication"/>
    <property type="evidence" value="ECO:0000318"/>
    <property type="project" value="GO_Central"/>
</dbReference>
<dbReference type="GO" id="GO:0032784">
    <property type="term" value="P:regulation of DNA-templated transcription elongation"/>
    <property type="evidence" value="ECO:0000250"/>
    <property type="project" value="UniProtKB"/>
</dbReference>
<dbReference type="CDD" id="cd11712">
    <property type="entry name" value="GINS_A_psf2"/>
    <property type="match status" value="1"/>
</dbReference>
<dbReference type="CDD" id="cd21694">
    <property type="entry name" value="GINS_B_Psf2"/>
    <property type="match status" value="1"/>
</dbReference>
<dbReference type="FunFam" id="1.20.58.1020:FF:000001">
    <property type="entry name" value="DNA replication complex GINS protein PSF2"/>
    <property type="match status" value="1"/>
</dbReference>
<dbReference type="FunFam" id="3.40.5.50:FF:000001">
    <property type="entry name" value="DNA replication complex GINS protein PSF2"/>
    <property type="match status" value="1"/>
</dbReference>
<dbReference type="Gene3D" id="1.20.58.1020">
    <property type="match status" value="1"/>
</dbReference>
<dbReference type="Gene3D" id="3.40.5.50">
    <property type="match status" value="1"/>
</dbReference>
<dbReference type="InterPro" id="IPR021151">
    <property type="entry name" value="GINS_A"/>
</dbReference>
<dbReference type="InterPro" id="IPR036224">
    <property type="entry name" value="GINS_bundle-like_dom_sf"/>
</dbReference>
<dbReference type="InterPro" id="IPR007257">
    <property type="entry name" value="GINS_Psf2"/>
</dbReference>
<dbReference type="InterPro" id="IPR056784">
    <property type="entry name" value="PSF2_N"/>
</dbReference>
<dbReference type="PANTHER" id="PTHR12772">
    <property type="entry name" value="DNA REPLICATION COMPLEX GINS PROTEIN PSF2"/>
    <property type="match status" value="1"/>
</dbReference>
<dbReference type="PANTHER" id="PTHR12772:SF0">
    <property type="entry name" value="DNA REPLICATION COMPLEX GINS PROTEIN PSF2"/>
    <property type="match status" value="1"/>
</dbReference>
<dbReference type="Pfam" id="PF25005">
    <property type="entry name" value="PSF2_N"/>
    <property type="match status" value="1"/>
</dbReference>
<dbReference type="Pfam" id="PF05916">
    <property type="entry name" value="Sld5"/>
    <property type="match status" value="1"/>
</dbReference>
<dbReference type="PIRSF" id="PIRSF028998">
    <property type="entry name" value="GINS_Psf2_subgr"/>
    <property type="match status" value="1"/>
</dbReference>
<dbReference type="SUPFAM" id="SSF158573">
    <property type="entry name" value="GINS helical bundle-like"/>
    <property type="match status" value="1"/>
</dbReference>
<dbReference type="SUPFAM" id="SSF160059">
    <property type="entry name" value="PriA/YqbF domain"/>
    <property type="match status" value="1"/>
</dbReference>
<accession>Q9VQY9</accession>
<accession>M9PB28</accession>
<accession>Q8SYY9</accession>
<proteinExistence type="evidence at protein level"/>
<evidence type="ECO:0000250" key="1"/>
<evidence type="ECO:0000256" key="2">
    <source>
        <dbReference type="SAM" id="MobiDB-lite"/>
    </source>
</evidence>
<evidence type="ECO:0000305" key="3"/>
<organism>
    <name type="scientific">Drosophila melanogaster</name>
    <name type="common">Fruit fly</name>
    <dbReference type="NCBI Taxonomy" id="7227"/>
    <lineage>
        <taxon>Eukaryota</taxon>
        <taxon>Metazoa</taxon>
        <taxon>Ecdysozoa</taxon>
        <taxon>Arthropoda</taxon>
        <taxon>Hexapoda</taxon>
        <taxon>Insecta</taxon>
        <taxon>Pterygota</taxon>
        <taxon>Neoptera</taxon>
        <taxon>Endopterygota</taxon>
        <taxon>Diptera</taxon>
        <taxon>Brachycera</taxon>
        <taxon>Muscomorpha</taxon>
        <taxon>Ephydroidea</taxon>
        <taxon>Drosophilidae</taxon>
        <taxon>Drosophila</taxon>
        <taxon>Sophophora</taxon>
    </lineage>
</organism>
<keyword id="KW-0002">3D-structure</keyword>
<keyword id="KW-0235">DNA replication</keyword>
<keyword id="KW-0539">Nucleus</keyword>
<keyword id="KW-1185">Reference proteome</keyword>